<name>MYLK2_RABIT</name>
<comment type="function">
    <text evidence="1">Implicated in the level of global muscle contraction and cardiac function (By similarity). Phosphorylates a specific serine in the N-terminus of a myosin light chain.</text>
</comment>
<comment type="catalytic activity">
    <reaction>
        <text>L-seryl-[myosin light chain] + ATP = O-phospho-L-seryl-[myosin light chain] + ADP + H(+)</text>
        <dbReference type="Rhea" id="RHEA:22004"/>
        <dbReference type="Rhea" id="RHEA-COMP:13684"/>
        <dbReference type="Rhea" id="RHEA-COMP:13685"/>
        <dbReference type="ChEBI" id="CHEBI:15378"/>
        <dbReference type="ChEBI" id="CHEBI:29999"/>
        <dbReference type="ChEBI" id="CHEBI:30616"/>
        <dbReference type="ChEBI" id="CHEBI:83421"/>
        <dbReference type="ChEBI" id="CHEBI:456216"/>
        <dbReference type="EC" id="2.7.11.18"/>
    </reaction>
</comment>
<comment type="catalytic activity">
    <reaction>
        <text>L-threonyl-[myosin light chain] + ATP = O-phospho-L-threonyl-[myosin light chain] + ADP + H(+)</text>
        <dbReference type="Rhea" id="RHEA:53900"/>
        <dbReference type="Rhea" id="RHEA-COMP:13686"/>
        <dbReference type="Rhea" id="RHEA-COMP:13687"/>
        <dbReference type="ChEBI" id="CHEBI:15378"/>
        <dbReference type="ChEBI" id="CHEBI:30013"/>
        <dbReference type="ChEBI" id="CHEBI:30616"/>
        <dbReference type="ChEBI" id="CHEBI:61977"/>
        <dbReference type="ChEBI" id="CHEBI:456216"/>
        <dbReference type="EC" id="2.7.11.18"/>
    </reaction>
</comment>
<comment type="subunit">
    <text evidence="1">May interact with centrin.</text>
</comment>
<comment type="subcellular location">
    <subcellularLocation>
        <location evidence="7">Cytoplasm</location>
    </subcellularLocation>
    <text>Colocalizes with phosphorylated myosin light chain (RLCP) at filaments of the myofibrils.</text>
</comment>
<comment type="similarity">
    <text evidence="9">Belongs to the protein kinase superfamily. CAMK Ser/Thr protein kinase family.</text>
</comment>
<feature type="initiator methionine" description="Removed" evidence="8">
    <location>
        <position position="1"/>
    </location>
</feature>
<feature type="chain" id="PRO_0000086410" description="Myosin light chain kinase 2, skeletal/cardiac muscle">
    <location>
        <begin position="2"/>
        <end position="608"/>
    </location>
</feature>
<feature type="domain" description="Protein kinase" evidence="4">
    <location>
        <begin position="297"/>
        <end position="552"/>
    </location>
</feature>
<feature type="region of interest" description="Disordered" evidence="6">
    <location>
        <begin position="1"/>
        <end position="160"/>
    </location>
</feature>
<feature type="region of interest" description="Disordered" evidence="6">
    <location>
        <begin position="214"/>
        <end position="235"/>
    </location>
</feature>
<feature type="region of interest" description="Calmodulin-binding">
    <location>
        <begin position="586"/>
        <end position="598"/>
    </location>
</feature>
<feature type="compositionally biased region" description="Basic and acidic residues" evidence="6">
    <location>
        <begin position="31"/>
        <end position="43"/>
    </location>
</feature>
<feature type="compositionally biased region" description="Basic and acidic residues" evidence="6">
    <location>
        <begin position="50"/>
        <end position="63"/>
    </location>
</feature>
<feature type="compositionally biased region" description="Gly residues" evidence="6">
    <location>
        <begin position="82"/>
        <end position="91"/>
    </location>
</feature>
<feature type="compositionally biased region" description="Basic and acidic residues" evidence="6">
    <location>
        <begin position="116"/>
        <end position="127"/>
    </location>
</feature>
<feature type="active site" description="Proton acceptor" evidence="4 5">
    <location>
        <position position="418"/>
    </location>
</feature>
<feature type="binding site" evidence="4">
    <location>
        <begin position="303"/>
        <end position="311"/>
    </location>
    <ligand>
        <name>ATP</name>
        <dbReference type="ChEBI" id="CHEBI:30616"/>
    </ligand>
</feature>
<feature type="binding site" evidence="4">
    <location>
        <position position="326"/>
    </location>
    <ligand>
        <name>ATP</name>
        <dbReference type="ChEBI" id="CHEBI:30616"/>
    </ligand>
</feature>
<feature type="modified residue" description="N-acetylalanine" evidence="8">
    <location>
        <position position="2"/>
    </location>
</feature>
<feature type="modified residue" description="Phosphoserine" evidence="3">
    <location>
        <position position="153"/>
    </location>
</feature>
<feature type="modified residue" description="Phosphoserine" evidence="3">
    <location>
        <position position="159"/>
    </location>
</feature>
<feature type="modified residue" description="Phosphoserine" evidence="3">
    <location>
        <position position="161"/>
    </location>
</feature>
<feature type="modified residue" description="Phosphothreonine" evidence="2">
    <location>
        <position position="457"/>
    </location>
</feature>
<feature type="sequence conflict" description="In Ref. 2; AA sequence and 3; AA sequence." evidence="9" ref="2 3">
    <original>K</original>
    <variation>KK</variation>
    <location>
        <position position="336"/>
    </location>
</feature>
<feature type="helix" evidence="10">
    <location>
        <begin position="581"/>
        <end position="599"/>
    </location>
</feature>
<reference key="1">
    <citation type="journal article" date="1990" name="J. Biol. Chem.">
        <title>Domain characterization of rabbit skeletal muscle myosin light chain kinase.</title>
        <authorList>
            <person name="Herring B.P."/>
            <person name="Stull J.T."/>
            <person name="Gallagher P.J."/>
        </authorList>
    </citation>
    <scope>NUCLEOTIDE SEQUENCE [MRNA]</scope>
</reference>
<reference key="2">
    <citation type="journal article" date="1986" name="Biochemistry">
        <title>Amino acid sequence of rabbit skeletal muscle myosin light chain kinase.</title>
        <authorList>
            <person name="Takio K."/>
            <person name="Blumenthal D.K."/>
            <person name="Walsh K.A."/>
            <person name="Titani K."/>
            <person name="Krebs E.G."/>
        </authorList>
    </citation>
    <scope>PROTEIN SEQUENCE OF 2-604</scope>
    <scope>ACETYLATION AT ALA-2</scope>
</reference>
<reference key="3">
    <citation type="journal article" date="1985" name="Biochemistry">
        <title>Amino acid sequence of an active fragment of rabbit skeletal muscle myosin light chain kinase.</title>
        <authorList>
            <person name="Takio K."/>
            <person name="Blumenthal D.K."/>
            <person name="Edelman A.M."/>
            <person name="Walsh K.A."/>
            <person name="Krebs E.G."/>
            <person name="Titani K."/>
        </authorList>
    </citation>
    <scope>PROTEIN SEQUENCE OF 296-604</scope>
</reference>
<reference key="4">
    <citation type="journal article" date="2001" name="Cell">
        <title>The overall pattern of cardiac contraction depends on a spatial gradient of myosin regulatory light chain phosphorylation.</title>
        <authorList>
            <person name="Davis J.S."/>
            <person name="Hassanzadeh S."/>
            <person name="Winitsky S."/>
            <person name="Lin H."/>
            <person name="Satorius C."/>
            <person name="Vemuri R."/>
            <person name="Aletras A.H."/>
            <person name="Wen H."/>
            <person name="Epstein N.D."/>
        </authorList>
    </citation>
    <scope>SUBCELLULAR LOCATION</scope>
</reference>
<reference key="5">
    <citation type="journal article" date="1992" name="Science">
        <title>Solution structure of a calmodulin-target peptide complex by multidimensional NMR.</title>
        <authorList>
            <person name="Ikura M."/>
            <person name="Clore G.M."/>
            <person name="Gronenborn A.M."/>
            <person name="Zhu G."/>
            <person name="Klee C.B."/>
            <person name="Bax A."/>
        </authorList>
    </citation>
    <scope>STRUCTURE BY NMR OF 578-603</scope>
</reference>
<accession>P07313</accession>
<proteinExistence type="evidence at protein level"/>
<organism>
    <name type="scientific">Oryctolagus cuniculus</name>
    <name type="common">Rabbit</name>
    <dbReference type="NCBI Taxonomy" id="9986"/>
    <lineage>
        <taxon>Eukaryota</taxon>
        <taxon>Metazoa</taxon>
        <taxon>Chordata</taxon>
        <taxon>Craniata</taxon>
        <taxon>Vertebrata</taxon>
        <taxon>Euteleostomi</taxon>
        <taxon>Mammalia</taxon>
        <taxon>Eutheria</taxon>
        <taxon>Euarchontoglires</taxon>
        <taxon>Glires</taxon>
        <taxon>Lagomorpha</taxon>
        <taxon>Leporidae</taxon>
        <taxon>Oryctolagus</taxon>
    </lineage>
</organism>
<gene>
    <name type="primary">MYLK2</name>
</gene>
<dbReference type="EC" id="2.7.11.18"/>
<dbReference type="EMBL" id="J05194">
    <property type="protein sequence ID" value="AAA31400.1"/>
    <property type="molecule type" value="mRNA"/>
</dbReference>
<dbReference type="PIR" id="A35021">
    <property type="entry name" value="A35021"/>
</dbReference>
<dbReference type="RefSeq" id="NP_001075705.1">
    <property type="nucleotide sequence ID" value="NM_001082236.1"/>
</dbReference>
<dbReference type="RefSeq" id="XP_051700840.2">
    <property type="nucleotide sequence ID" value="XM_051844880.2"/>
</dbReference>
<dbReference type="PDB" id="2BBM">
    <property type="method" value="NMR"/>
    <property type="chains" value="B=578-603"/>
</dbReference>
<dbReference type="PDB" id="2BBN">
    <property type="method" value="NMR"/>
    <property type="chains" value="B=578-603"/>
</dbReference>
<dbReference type="PDB" id="6HR1">
    <property type="method" value="X-ray"/>
    <property type="resolution" value="1.90 A"/>
    <property type="chains" value="A/B=580-599"/>
</dbReference>
<dbReference type="PDBsum" id="2BBM"/>
<dbReference type="PDBsum" id="2BBN"/>
<dbReference type="PDBsum" id="6HR1"/>
<dbReference type="BMRB" id="P07313"/>
<dbReference type="SMR" id="P07313"/>
<dbReference type="FunCoup" id="P07313">
    <property type="interactions" value="88"/>
</dbReference>
<dbReference type="STRING" id="9986.ENSOCUP00000040286"/>
<dbReference type="BindingDB" id="P07313"/>
<dbReference type="ChEMBL" id="CHEMBL4739674"/>
<dbReference type="iPTMnet" id="P07313"/>
<dbReference type="GeneID" id="100009051"/>
<dbReference type="KEGG" id="ocu:100009051"/>
<dbReference type="CTD" id="85366"/>
<dbReference type="InParanoid" id="P07313"/>
<dbReference type="OrthoDB" id="6070751at2759"/>
<dbReference type="BRENDA" id="2.7.11.18">
    <property type="organism ID" value="1749"/>
</dbReference>
<dbReference type="EvolutionaryTrace" id="P07313"/>
<dbReference type="Proteomes" id="UP000001811">
    <property type="component" value="Unplaced"/>
</dbReference>
<dbReference type="GO" id="GO:0005737">
    <property type="term" value="C:cytoplasm"/>
    <property type="evidence" value="ECO:0007669"/>
    <property type="project" value="UniProtKB-SubCell"/>
</dbReference>
<dbReference type="GO" id="GO:0005524">
    <property type="term" value="F:ATP binding"/>
    <property type="evidence" value="ECO:0007669"/>
    <property type="project" value="UniProtKB-KW"/>
</dbReference>
<dbReference type="GO" id="GO:0004683">
    <property type="term" value="F:calcium/calmodulin-dependent protein kinase activity"/>
    <property type="evidence" value="ECO:0000314"/>
    <property type="project" value="BHF-UCL"/>
</dbReference>
<dbReference type="GO" id="GO:0005516">
    <property type="term" value="F:calmodulin binding"/>
    <property type="evidence" value="ECO:0000314"/>
    <property type="project" value="BHF-UCL"/>
</dbReference>
<dbReference type="GO" id="GO:0004687">
    <property type="term" value="F:myosin light chain kinase activity"/>
    <property type="evidence" value="ECO:0000314"/>
    <property type="project" value="BHF-UCL"/>
</dbReference>
<dbReference type="GO" id="GO:0032971">
    <property type="term" value="P:regulation of muscle filament sliding"/>
    <property type="evidence" value="ECO:0000305"/>
    <property type="project" value="BHF-UCL"/>
</dbReference>
<dbReference type="CDD" id="cd14190">
    <property type="entry name" value="STKc_MLCK2"/>
    <property type="match status" value="1"/>
</dbReference>
<dbReference type="FunFam" id="3.30.200.20:FF:000359">
    <property type="entry name" value="myosin light chain kinase 2, skeletal/cardiac muscle"/>
    <property type="match status" value="1"/>
</dbReference>
<dbReference type="FunFam" id="1.10.510.10:FF:000135">
    <property type="entry name" value="Putative myosin light chain kinase 3"/>
    <property type="match status" value="1"/>
</dbReference>
<dbReference type="Gene3D" id="3.30.200.20">
    <property type="entry name" value="Phosphorylase Kinase, domain 1"/>
    <property type="match status" value="1"/>
</dbReference>
<dbReference type="Gene3D" id="1.10.510.10">
    <property type="entry name" value="Transferase(Phosphotransferase) domain 1"/>
    <property type="match status" value="1"/>
</dbReference>
<dbReference type="IDEAL" id="IID50197"/>
<dbReference type="InterPro" id="IPR011009">
    <property type="entry name" value="Kinase-like_dom_sf"/>
</dbReference>
<dbReference type="InterPro" id="IPR042717">
    <property type="entry name" value="MLCK2_STKc"/>
</dbReference>
<dbReference type="InterPro" id="IPR000719">
    <property type="entry name" value="Prot_kinase_dom"/>
</dbReference>
<dbReference type="InterPro" id="IPR017441">
    <property type="entry name" value="Protein_kinase_ATP_BS"/>
</dbReference>
<dbReference type="InterPro" id="IPR008271">
    <property type="entry name" value="Ser/Thr_kinase_AS"/>
</dbReference>
<dbReference type="PANTHER" id="PTHR24347">
    <property type="entry name" value="SERINE/THREONINE-PROTEIN KINASE"/>
    <property type="match status" value="1"/>
</dbReference>
<dbReference type="Pfam" id="PF00069">
    <property type="entry name" value="Pkinase"/>
    <property type="match status" value="1"/>
</dbReference>
<dbReference type="SMART" id="SM00220">
    <property type="entry name" value="S_TKc"/>
    <property type="match status" value="1"/>
</dbReference>
<dbReference type="SUPFAM" id="SSF56112">
    <property type="entry name" value="Protein kinase-like (PK-like)"/>
    <property type="match status" value="1"/>
</dbReference>
<dbReference type="PROSITE" id="PS00107">
    <property type="entry name" value="PROTEIN_KINASE_ATP"/>
    <property type="match status" value="1"/>
</dbReference>
<dbReference type="PROSITE" id="PS50011">
    <property type="entry name" value="PROTEIN_KINASE_DOM"/>
    <property type="match status" value="1"/>
</dbReference>
<dbReference type="PROSITE" id="PS00108">
    <property type="entry name" value="PROTEIN_KINASE_ST"/>
    <property type="match status" value="1"/>
</dbReference>
<protein>
    <recommendedName>
        <fullName>Myosin light chain kinase 2, skeletal/cardiac muscle</fullName>
        <shortName>MLCK2</shortName>
        <ecNumber>2.7.11.18</ecNumber>
    </recommendedName>
</protein>
<keyword id="KW-0002">3D-structure</keyword>
<keyword id="KW-0007">Acetylation</keyword>
<keyword id="KW-0067">ATP-binding</keyword>
<keyword id="KW-0112">Calmodulin-binding</keyword>
<keyword id="KW-0963">Cytoplasm</keyword>
<keyword id="KW-0903">Direct protein sequencing</keyword>
<keyword id="KW-0418">Kinase</keyword>
<keyword id="KW-0547">Nucleotide-binding</keyword>
<keyword id="KW-0597">Phosphoprotein</keyword>
<keyword id="KW-1185">Reference proteome</keyword>
<keyword id="KW-0723">Serine/threonine-protein kinase</keyword>
<keyword id="KW-0808">Transferase</keyword>
<sequence>MATENGAVELGIQSLSTDEASKGAASEESLAAEKDPAPPDPEKGPGPSDTKQDPDPSTPKKDANTPAPEKGDVVPAQPSAGGSQGPAGEGGQVEAPAEGSAGKPAALPQQTATAEASEKKPEAEKGPSGHQDPGEPTVGKKVAEGQAAARRGSPAFLHSPSCPAIIASTEKLPAQKPLSEASELIFEGVPATPGPTEPGPAKAEGGVDLLAESQKEAGEKAPGQADQAKVQGDTSRGIEFQAVPSERPRPEVGQALCLPAREEDCFQILDDCPPPPAPFPHRIVELRTGNVSSEFSMNSKEALGGGKFGAVCTCTEKSTGLKLAAKVIKKQTPKDKEMVMLEIEVMNQLNHRNLIQLYAAIETPHEIVLFMEYIEGGELFERIVDEDYHLTEVDTMVFVRQICDGILFMHKMRVLHLDLKPENILCVNTTGHLVKIIDFGLARRYNPNEKLKVNFGTPEFLSPEVVNYDQISDKTDMWSLGVITYMLLSGLSPFLGDDDTETLNNVLSGNWYFDEETFEAVSDEAKDFVSNLIVKEQGARMSAAQCLAHPWLNNLAEKAKRCNRRLKSQILLKKYLMKRRWKKNFIAVSAANRFKKISSSGALMALGV</sequence>
<evidence type="ECO:0000250" key="1"/>
<evidence type="ECO:0000250" key="2">
    <source>
        <dbReference type="UniProtKB" id="P20689"/>
    </source>
</evidence>
<evidence type="ECO:0000250" key="3">
    <source>
        <dbReference type="UniProtKB" id="Q8VCR8"/>
    </source>
</evidence>
<evidence type="ECO:0000255" key="4">
    <source>
        <dbReference type="PROSITE-ProRule" id="PRU00159"/>
    </source>
</evidence>
<evidence type="ECO:0000255" key="5">
    <source>
        <dbReference type="PROSITE-ProRule" id="PRU10027"/>
    </source>
</evidence>
<evidence type="ECO:0000256" key="6">
    <source>
        <dbReference type="SAM" id="MobiDB-lite"/>
    </source>
</evidence>
<evidence type="ECO:0000269" key="7">
    <source>
    </source>
</evidence>
<evidence type="ECO:0000269" key="8">
    <source>
    </source>
</evidence>
<evidence type="ECO:0000305" key="9"/>
<evidence type="ECO:0007829" key="10">
    <source>
        <dbReference type="PDB" id="6HR1"/>
    </source>
</evidence>